<evidence type="ECO:0000250" key="1"/>
<evidence type="ECO:0000305" key="2"/>
<name>XYLA_BACSU</name>
<sequence length="445" mass="50282">MAQSHSSSINYFGSANKVVYEGKDSTNPLAFKYYNPQEVIGGKTLKEHLRFSIAYWHTFTADGTDVFGAATMQRPWDHYKGMDLAKMRVEAAFEMFEKLDAPFFAFHDRDIAPEGSTLKETNQNLDMIMGMIKDYMRNSGVKLLWNTANMFTNPRFVHGAATSCNADVFAYAAAQVKKGLETAKELGAENYVFWGGREGYETLLNTDLKFELDNLARFMHMAVDYAKEIGYTGQFLIEPKPKEPTTHQYDTDAATTIAFLKQYGLDNHFKLNLEANHATLAGHTFEHELRMARVHGLLGSVDANQGHPLLGWDTDEFPTDLYSTTLAMYEILQNGGLGSGGLNFDAKVRRSSFEPDDLIYAHIAGMDAFARGLKVAHKLIEDRVFEDVIQHRYRSFTEGIGLEIIEGRANFHTLEQYALNHKSIKNESGRQEKLKAILNQYILEV</sequence>
<feature type="chain" id="PRO_0000195767" description="Xylose isomerase">
    <location>
        <begin position="1"/>
        <end position="445"/>
    </location>
</feature>
<feature type="active site" evidence="1">
    <location>
        <position position="107"/>
    </location>
</feature>
<feature type="active site" evidence="1">
    <location>
        <position position="110"/>
    </location>
</feature>
<feature type="binding site" evidence="1">
    <location>
        <position position="238"/>
    </location>
    <ligand>
        <name>Mg(2+)</name>
        <dbReference type="ChEBI" id="CHEBI:18420"/>
        <label>1</label>
    </ligand>
</feature>
<feature type="binding site" evidence="1">
    <location>
        <position position="274"/>
    </location>
    <ligand>
        <name>Mg(2+)</name>
        <dbReference type="ChEBI" id="CHEBI:18420"/>
        <label>1</label>
    </ligand>
</feature>
<feature type="binding site" evidence="1">
    <location>
        <position position="274"/>
    </location>
    <ligand>
        <name>Mg(2+)</name>
        <dbReference type="ChEBI" id="CHEBI:18420"/>
        <label>2</label>
    </ligand>
</feature>
<feature type="binding site" evidence="1">
    <location>
        <position position="277"/>
    </location>
    <ligand>
        <name>Mg(2+)</name>
        <dbReference type="ChEBI" id="CHEBI:18420"/>
        <label>2</label>
    </ligand>
</feature>
<feature type="binding site" evidence="1">
    <location>
        <position position="302"/>
    </location>
    <ligand>
        <name>Mg(2+)</name>
        <dbReference type="ChEBI" id="CHEBI:18420"/>
        <label>1</label>
    </ligand>
</feature>
<feature type="binding site" evidence="1">
    <location>
        <position position="313"/>
    </location>
    <ligand>
        <name>Mg(2+)</name>
        <dbReference type="ChEBI" id="CHEBI:18420"/>
        <label>2</label>
    </ligand>
</feature>
<feature type="binding site" evidence="1">
    <location>
        <position position="315"/>
    </location>
    <ligand>
        <name>Mg(2+)</name>
        <dbReference type="ChEBI" id="CHEBI:18420"/>
        <label>2</label>
    </ligand>
</feature>
<feature type="binding site" evidence="1">
    <location>
        <position position="345"/>
    </location>
    <ligand>
        <name>Mg(2+)</name>
        <dbReference type="ChEBI" id="CHEBI:18420"/>
        <label>1</label>
    </ligand>
</feature>
<feature type="sequence conflict" description="In Ref. 2; CAA26562." evidence="2" ref="2">
    <original>I</original>
    <variation>V</variation>
    <location>
        <position position="9"/>
    </location>
</feature>
<feature type="sequence conflict" description="In Ref. 2; CAA26562." evidence="2" ref="2">
    <original>A</original>
    <variation>V</variation>
    <location>
        <position position="15"/>
    </location>
</feature>
<feature type="sequence conflict" description="In Ref. 2; CAA26562." evidence="2" ref="2">
    <original>Y</original>
    <variation>F</variation>
    <location>
        <position position="20"/>
    </location>
</feature>
<feature type="sequence conflict" description="In Ref. 2; CAA26562." evidence="2" ref="2">
    <original>D</original>
    <variation>A</variation>
    <location>
        <position position="24"/>
    </location>
</feature>
<feature type="sequence conflict" description="In Ref. 2; CAA26562." evidence="2" ref="2">
    <original>L</original>
    <variation>M</variation>
    <location>
        <position position="45"/>
    </location>
</feature>
<feature type="sequence conflict" description="In Ref. 2; CAA26562." evidence="2" ref="2">
    <original>KM</original>
    <variation>RA</variation>
    <location>
        <begin position="86"/>
        <end position="87"/>
    </location>
</feature>
<feature type="sequence conflict" description="In Ref. 2; CAA26562." evidence="2" ref="2">
    <original>MIM</original>
    <variation>IIV</variation>
    <location>
        <begin position="127"/>
        <end position="129"/>
    </location>
</feature>
<feature type="sequence conflict" description="In Ref. 2; CAA26562." evidence="2" ref="2">
    <original>NSG</original>
    <variation>DSN</variation>
    <location>
        <begin position="138"/>
        <end position="140"/>
    </location>
</feature>
<feature type="sequence conflict" description="In Ref. 1; AAB41093." evidence="2" ref="1">
    <original>N</original>
    <variation>D</variation>
    <location>
        <position position="214"/>
    </location>
</feature>
<feature type="sequence conflict" description="In Ref. 2; CAA26562." evidence="2" ref="2">
    <original>G</original>
    <variation>E</variation>
    <location>
        <position position="230"/>
    </location>
</feature>
<feature type="sequence conflict" description="In Ref. 1; AAB41093." evidence="2" ref="1">
    <original>T</original>
    <variation>A</variation>
    <location>
        <position position="246"/>
    </location>
</feature>
<feature type="sequence conflict" description="In Ref. 2; CAA26562." evidence="2" ref="2">
    <original>I</original>
    <variation>V</variation>
    <location>
        <position position="359"/>
    </location>
</feature>
<feature type="sequence conflict" description="In Ref. 2; CAA26562." evidence="2" ref="2">
    <original>I</original>
    <variation>T</variation>
    <location>
        <position position="405"/>
    </location>
</feature>
<feature type="sequence conflict" description="In Ref. 2; CAA26562." evidence="2" ref="2">
    <original>HKS</original>
    <variation>NKT</variation>
    <location>
        <begin position="421"/>
        <end position="423"/>
    </location>
</feature>
<feature type="sequence conflict" description="In Ref. 2; CAA26562." evidence="2" ref="2">
    <original>K</original>
    <variation>R</variation>
    <location>
        <position position="433"/>
    </location>
</feature>
<feature type="sequence conflict" description="In Ref. 2; CAA26562." evidence="2" ref="2">
    <original>A</original>
    <variation>P</variation>
    <location>
        <position position="436"/>
    </location>
</feature>
<keyword id="KW-0119">Carbohydrate metabolism</keyword>
<keyword id="KW-0963">Cytoplasm</keyword>
<keyword id="KW-0413">Isomerase</keyword>
<keyword id="KW-0460">Magnesium</keyword>
<keyword id="KW-0479">Metal-binding</keyword>
<keyword id="KW-1185">Reference proteome</keyword>
<keyword id="KW-0859">Xylose metabolism</keyword>
<comment type="catalytic activity">
    <reaction>
        <text>alpha-D-xylose = alpha-D-xylulofuranose</text>
        <dbReference type="Rhea" id="RHEA:22816"/>
        <dbReference type="ChEBI" id="CHEBI:28518"/>
        <dbReference type="ChEBI" id="CHEBI:188998"/>
        <dbReference type="EC" id="5.3.1.5"/>
    </reaction>
</comment>
<comment type="cofactor">
    <cofactor evidence="1">
        <name>Mg(2+)</name>
        <dbReference type="ChEBI" id="CHEBI:18420"/>
    </cofactor>
    <text evidence="1">Binds 2 magnesium ions per subunit.</text>
</comment>
<comment type="subunit">
    <text>Homotetramer.</text>
</comment>
<comment type="subcellular location">
    <subcellularLocation>
        <location>Cytoplasm</location>
    </subcellularLocation>
</comment>
<comment type="similarity">
    <text evidence="2">Belongs to the xylose isomerase family.</text>
</comment>
<comment type="sequence caution" evidence="2">
    <conflict type="frameshift">
        <sequence resource="EMBL-CDS" id="CAA26562"/>
    </conflict>
</comment>
<dbReference type="EC" id="5.3.1.5"/>
<dbReference type="EMBL" id="X02795">
    <property type="protein sequence ID" value="CAA26562.1"/>
    <property type="status" value="ALT_FRAME"/>
    <property type="molecule type" value="Genomic_DNA"/>
</dbReference>
<dbReference type="EMBL" id="U66480">
    <property type="protein sequence ID" value="AAB41093.1"/>
    <property type="molecule type" value="Genomic_DNA"/>
</dbReference>
<dbReference type="EMBL" id="AL009126">
    <property type="protein sequence ID" value="CAB13644.2"/>
    <property type="molecule type" value="Genomic_DNA"/>
</dbReference>
<dbReference type="PIR" id="C69735">
    <property type="entry name" value="ISBSXS"/>
</dbReference>
<dbReference type="RefSeq" id="NP_389642.2">
    <property type="nucleotide sequence ID" value="NC_000964.3"/>
</dbReference>
<dbReference type="RefSeq" id="WP_003245235.1">
    <property type="nucleotide sequence ID" value="NZ_OZ025638.1"/>
</dbReference>
<dbReference type="SMR" id="P0CI80"/>
<dbReference type="FunCoup" id="P0CI80">
    <property type="interactions" value="373"/>
</dbReference>
<dbReference type="STRING" id="224308.BSU17600"/>
<dbReference type="jPOST" id="P0CI80"/>
<dbReference type="PaxDb" id="224308-BSU17600"/>
<dbReference type="EnsemblBacteria" id="CAB13644">
    <property type="protein sequence ID" value="CAB13644"/>
    <property type="gene ID" value="BSU_17600"/>
</dbReference>
<dbReference type="GeneID" id="939558"/>
<dbReference type="KEGG" id="bsu:BSU17600"/>
<dbReference type="PATRIC" id="fig|224308.179.peg.1910"/>
<dbReference type="eggNOG" id="COG2115">
    <property type="taxonomic scope" value="Bacteria"/>
</dbReference>
<dbReference type="InParanoid" id="P0CI80"/>
<dbReference type="OrthoDB" id="9763981at2"/>
<dbReference type="PhylomeDB" id="P0CI80"/>
<dbReference type="Proteomes" id="UP000001570">
    <property type="component" value="Chromosome"/>
</dbReference>
<dbReference type="GO" id="GO:0005737">
    <property type="term" value="C:cytoplasm"/>
    <property type="evidence" value="ECO:0007669"/>
    <property type="project" value="UniProtKB-SubCell"/>
</dbReference>
<dbReference type="GO" id="GO:0008903">
    <property type="term" value="F:hydroxypyruvate isomerase activity"/>
    <property type="evidence" value="ECO:0000318"/>
    <property type="project" value="GO_Central"/>
</dbReference>
<dbReference type="GO" id="GO:0000287">
    <property type="term" value="F:magnesium ion binding"/>
    <property type="evidence" value="ECO:0007669"/>
    <property type="project" value="UniProtKB-UniRule"/>
</dbReference>
<dbReference type="GO" id="GO:0009045">
    <property type="term" value="F:xylose isomerase activity"/>
    <property type="evidence" value="ECO:0007669"/>
    <property type="project" value="UniProtKB-UniRule"/>
</dbReference>
<dbReference type="GO" id="GO:0042732">
    <property type="term" value="P:D-xylose metabolic process"/>
    <property type="evidence" value="ECO:0007669"/>
    <property type="project" value="UniProtKB-UniRule"/>
</dbReference>
<dbReference type="GO" id="GO:0046487">
    <property type="term" value="P:glyoxylate metabolic process"/>
    <property type="evidence" value="ECO:0000318"/>
    <property type="project" value="GO_Central"/>
</dbReference>
<dbReference type="FunFam" id="3.20.20.150:FF:000002">
    <property type="entry name" value="Xylose isomerase"/>
    <property type="match status" value="1"/>
</dbReference>
<dbReference type="Gene3D" id="3.20.20.150">
    <property type="entry name" value="Divalent-metal-dependent TIM barrel enzymes"/>
    <property type="match status" value="1"/>
</dbReference>
<dbReference type="HAMAP" id="MF_00455">
    <property type="entry name" value="Xylose_isom_A"/>
    <property type="match status" value="1"/>
</dbReference>
<dbReference type="InterPro" id="IPR036237">
    <property type="entry name" value="Xyl_isomerase-like_sf"/>
</dbReference>
<dbReference type="InterPro" id="IPR013452">
    <property type="entry name" value="Xylose_isom_bac"/>
</dbReference>
<dbReference type="InterPro" id="IPR001998">
    <property type="entry name" value="Xylose_isomerase"/>
</dbReference>
<dbReference type="NCBIfam" id="NF003998">
    <property type="entry name" value="PRK05474.1"/>
    <property type="match status" value="1"/>
</dbReference>
<dbReference type="NCBIfam" id="TIGR02630">
    <property type="entry name" value="xylose_isom_A"/>
    <property type="match status" value="1"/>
</dbReference>
<dbReference type="PANTHER" id="PTHR48408">
    <property type="match status" value="1"/>
</dbReference>
<dbReference type="PANTHER" id="PTHR48408:SF1">
    <property type="entry name" value="XYLOSE ISOMERASE"/>
    <property type="match status" value="1"/>
</dbReference>
<dbReference type="PRINTS" id="PR00688">
    <property type="entry name" value="XYLOSISMRASE"/>
</dbReference>
<dbReference type="SUPFAM" id="SSF51658">
    <property type="entry name" value="Xylose isomerase-like"/>
    <property type="match status" value="1"/>
</dbReference>
<dbReference type="PROSITE" id="PS51415">
    <property type="entry name" value="XYLOSE_ISOMERASE"/>
    <property type="match status" value="1"/>
</dbReference>
<protein>
    <recommendedName>
        <fullName>Xylose isomerase</fullName>
        <ecNumber>5.3.1.5</ecNumber>
    </recommendedName>
</protein>
<gene>
    <name type="primary">xylA</name>
    <name type="ordered locus">BSU17600</name>
</gene>
<reference key="1">
    <citation type="journal article" date="1985" name="Nucleic Acids Res.">
        <title>Nucleotide sequence of the Bacillus subtilis xylose isomerase gene: extensive homology between the Bacillus and Escherichia coli enzyme.</title>
        <authorList>
            <person name="Wilhelm M."/>
            <person name="Hollenberg C.P."/>
        </authorList>
    </citation>
    <scope>NUCLEOTIDE SEQUENCE [GENOMIC DNA]</scope>
</reference>
<reference key="2">
    <citation type="submission" date="1997-02" db="EMBL/GenBank/DDBJ databases">
        <title>Sequencing of a 26 kb region of the Bacillus subtilis genome downstream of spoVJ.</title>
        <authorList>
            <person name="Borchert S."/>
            <person name="Klein C."/>
            <person name="Piksa B."/>
            <person name="Hammelmann M."/>
            <person name="Entian K.-D."/>
        </authorList>
    </citation>
    <scope>NUCLEOTIDE SEQUENCE [GENOMIC DNA]</scope>
</reference>
<reference key="3">
    <citation type="journal article" date="1997" name="Nature">
        <title>The complete genome sequence of the Gram-positive bacterium Bacillus subtilis.</title>
        <authorList>
            <person name="Kunst F."/>
            <person name="Ogasawara N."/>
            <person name="Moszer I."/>
            <person name="Albertini A.M."/>
            <person name="Alloni G."/>
            <person name="Azevedo V."/>
            <person name="Bertero M.G."/>
            <person name="Bessieres P."/>
            <person name="Bolotin A."/>
            <person name="Borchert S."/>
            <person name="Borriss R."/>
            <person name="Boursier L."/>
            <person name="Brans A."/>
            <person name="Braun M."/>
            <person name="Brignell S.C."/>
            <person name="Bron S."/>
            <person name="Brouillet S."/>
            <person name="Bruschi C.V."/>
            <person name="Caldwell B."/>
            <person name="Capuano V."/>
            <person name="Carter N.M."/>
            <person name="Choi S.-K."/>
            <person name="Codani J.-J."/>
            <person name="Connerton I.F."/>
            <person name="Cummings N.J."/>
            <person name="Daniel R.A."/>
            <person name="Denizot F."/>
            <person name="Devine K.M."/>
            <person name="Duesterhoeft A."/>
            <person name="Ehrlich S.D."/>
            <person name="Emmerson P.T."/>
            <person name="Entian K.-D."/>
            <person name="Errington J."/>
            <person name="Fabret C."/>
            <person name="Ferrari E."/>
            <person name="Foulger D."/>
            <person name="Fritz C."/>
            <person name="Fujita M."/>
            <person name="Fujita Y."/>
            <person name="Fuma S."/>
            <person name="Galizzi A."/>
            <person name="Galleron N."/>
            <person name="Ghim S.-Y."/>
            <person name="Glaser P."/>
            <person name="Goffeau A."/>
            <person name="Golightly E.J."/>
            <person name="Grandi G."/>
            <person name="Guiseppi G."/>
            <person name="Guy B.J."/>
            <person name="Haga K."/>
            <person name="Haiech J."/>
            <person name="Harwood C.R."/>
            <person name="Henaut A."/>
            <person name="Hilbert H."/>
            <person name="Holsappel S."/>
            <person name="Hosono S."/>
            <person name="Hullo M.-F."/>
            <person name="Itaya M."/>
            <person name="Jones L.-M."/>
            <person name="Joris B."/>
            <person name="Karamata D."/>
            <person name="Kasahara Y."/>
            <person name="Klaerr-Blanchard M."/>
            <person name="Klein C."/>
            <person name="Kobayashi Y."/>
            <person name="Koetter P."/>
            <person name="Koningstein G."/>
            <person name="Krogh S."/>
            <person name="Kumano M."/>
            <person name="Kurita K."/>
            <person name="Lapidus A."/>
            <person name="Lardinois S."/>
            <person name="Lauber J."/>
            <person name="Lazarevic V."/>
            <person name="Lee S.-M."/>
            <person name="Levine A."/>
            <person name="Liu H."/>
            <person name="Masuda S."/>
            <person name="Mauel C."/>
            <person name="Medigue C."/>
            <person name="Medina N."/>
            <person name="Mellado R.P."/>
            <person name="Mizuno M."/>
            <person name="Moestl D."/>
            <person name="Nakai S."/>
            <person name="Noback M."/>
            <person name="Noone D."/>
            <person name="O'Reilly M."/>
            <person name="Ogawa K."/>
            <person name="Ogiwara A."/>
            <person name="Oudega B."/>
            <person name="Park S.-H."/>
            <person name="Parro V."/>
            <person name="Pohl T.M."/>
            <person name="Portetelle D."/>
            <person name="Porwollik S."/>
            <person name="Prescott A.M."/>
            <person name="Presecan E."/>
            <person name="Pujic P."/>
            <person name="Purnelle B."/>
            <person name="Rapoport G."/>
            <person name="Rey M."/>
            <person name="Reynolds S."/>
            <person name="Rieger M."/>
            <person name="Rivolta C."/>
            <person name="Rocha E."/>
            <person name="Roche B."/>
            <person name="Rose M."/>
            <person name="Sadaie Y."/>
            <person name="Sato T."/>
            <person name="Scanlan E."/>
            <person name="Schleich S."/>
            <person name="Schroeter R."/>
            <person name="Scoffone F."/>
            <person name="Sekiguchi J."/>
            <person name="Sekowska A."/>
            <person name="Seror S.J."/>
            <person name="Serror P."/>
            <person name="Shin B.-S."/>
            <person name="Soldo B."/>
            <person name="Sorokin A."/>
            <person name="Tacconi E."/>
            <person name="Takagi T."/>
            <person name="Takahashi H."/>
            <person name="Takemaru K."/>
            <person name="Takeuchi M."/>
            <person name="Tamakoshi A."/>
            <person name="Tanaka T."/>
            <person name="Terpstra P."/>
            <person name="Tognoni A."/>
            <person name="Tosato V."/>
            <person name="Uchiyama S."/>
            <person name="Vandenbol M."/>
            <person name="Vannier F."/>
            <person name="Vassarotti A."/>
            <person name="Viari A."/>
            <person name="Wambutt R."/>
            <person name="Wedler E."/>
            <person name="Wedler H."/>
            <person name="Weitzenegger T."/>
            <person name="Winters P."/>
            <person name="Wipat A."/>
            <person name="Yamamoto H."/>
            <person name="Yamane K."/>
            <person name="Yasumoto K."/>
            <person name="Yata K."/>
            <person name="Yoshida K."/>
            <person name="Yoshikawa H.-F."/>
            <person name="Zumstein E."/>
            <person name="Yoshikawa H."/>
            <person name="Danchin A."/>
        </authorList>
    </citation>
    <scope>NUCLEOTIDE SEQUENCE [LARGE SCALE GENOMIC DNA]</scope>
    <source>
        <strain>168</strain>
    </source>
</reference>
<reference key="4">
    <citation type="journal article" date="2009" name="Microbiology">
        <title>From a consortium sequence to a unified sequence: the Bacillus subtilis 168 reference genome a decade later.</title>
        <authorList>
            <person name="Barbe V."/>
            <person name="Cruveiller S."/>
            <person name="Kunst F."/>
            <person name="Lenoble P."/>
            <person name="Meurice G."/>
            <person name="Sekowska A."/>
            <person name="Vallenet D."/>
            <person name="Wang T."/>
            <person name="Moszer I."/>
            <person name="Medigue C."/>
            <person name="Danchin A."/>
        </authorList>
    </citation>
    <scope>SEQUENCE REVISION TO 214 AND 246</scope>
</reference>
<proteinExistence type="inferred from homology"/>
<accession>P0CI80</accession>
<accession>P04788</accession>
<accession>P94491</accession>
<organism>
    <name type="scientific">Bacillus subtilis (strain 168)</name>
    <dbReference type="NCBI Taxonomy" id="224308"/>
    <lineage>
        <taxon>Bacteria</taxon>
        <taxon>Bacillati</taxon>
        <taxon>Bacillota</taxon>
        <taxon>Bacilli</taxon>
        <taxon>Bacillales</taxon>
        <taxon>Bacillaceae</taxon>
        <taxon>Bacillus</taxon>
    </lineage>
</organism>